<keyword id="KW-0028">Amino-acid biosynthesis</keyword>
<keyword id="KW-0032">Aminotransferase</keyword>
<keyword id="KW-0368">Histidine biosynthesis</keyword>
<keyword id="KW-0663">Pyridoxal phosphate</keyword>
<keyword id="KW-1185">Reference proteome</keyword>
<keyword id="KW-0808">Transferase</keyword>
<protein>
    <recommendedName>
        <fullName evidence="1">Histidinol-phosphate aminotransferase</fullName>
        <ecNumber evidence="1">2.6.1.9</ecNumber>
    </recommendedName>
    <alternativeName>
        <fullName evidence="1">Imidazole acetol-phosphate transaminase</fullName>
    </alternativeName>
</protein>
<organism>
    <name type="scientific">Pseudomonas putida (strain ATCC 47054 / DSM 6125 / CFBP 8728 / NCIMB 11950 / KT2440)</name>
    <dbReference type="NCBI Taxonomy" id="160488"/>
    <lineage>
        <taxon>Bacteria</taxon>
        <taxon>Pseudomonadati</taxon>
        <taxon>Pseudomonadota</taxon>
        <taxon>Gammaproteobacteria</taxon>
        <taxon>Pseudomonadales</taxon>
        <taxon>Pseudomonadaceae</taxon>
        <taxon>Pseudomonas</taxon>
    </lineage>
</organism>
<gene>
    <name evidence="1" type="primary">hisC</name>
    <name type="ordered locus">PP_0967</name>
</gene>
<name>HIS8_PSEPK</name>
<accession>Q88P86</accession>
<evidence type="ECO:0000255" key="1">
    <source>
        <dbReference type="HAMAP-Rule" id="MF_01023"/>
    </source>
</evidence>
<dbReference type="EC" id="2.6.1.9" evidence="1"/>
<dbReference type="EMBL" id="AE015451">
    <property type="protein sequence ID" value="AAN66592.1"/>
    <property type="molecule type" value="Genomic_DNA"/>
</dbReference>
<dbReference type="RefSeq" id="NP_743128.1">
    <property type="nucleotide sequence ID" value="NC_002947.4"/>
</dbReference>
<dbReference type="RefSeq" id="WP_010952157.1">
    <property type="nucleotide sequence ID" value="NZ_CP169744.1"/>
</dbReference>
<dbReference type="SMR" id="Q88P86"/>
<dbReference type="STRING" id="160488.PP_0967"/>
<dbReference type="PaxDb" id="160488-PP_0967"/>
<dbReference type="KEGG" id="ppu:PP_0967"/>
<dbReference type="PATRIC" id="fig|160488.4.peg.1029"/>
<dbReference type="eggNOG" id="COG0079">
    <property type="taxonomic scope" value="Bacteria"/>
</dbReference>
<dbReference type="HOGENOM" id="CLU_017584_3_0_6"/>
<dbReference type="OrthoDB" id="9809616at2"/>
<dbReference type="PhylomeDB" id="Q88P86"/>
<dbReference type="BioCyc" id="PPUT160488:G1G01-1041-MONOMER"/>
<dbReference type="UniPathway" id="UPA00031">
    <property type="reaction ID" value="UER00012"/>
</dbReference>
<dbReference type="Proteomes" id="UP000000556">
    <property type="component" value="Chromosome"/>
</dbReference>
<dbReference type="GO" id="GO:0004400">
    <property type="term" value="F:histidinol-phosphate transaminase activity"/>
    <property type="evidence" value="ECO:0007669"/>
    <property type="project" value="UniProtKB-UniRule"/>
</dbReference>
<dbReference type="GO" id="GO:0030170">
    <property type="term" value="F:pyridoxal phosphate binding"/>
    <property type="evidence" value="ECO:0007669"/>
    <property type="project" value="InterPro"/>
</dbReference>
<dbReference type="GO" id="GO:0000105">
    <property type="term" value="P:L-histidine biosynthetic process"/>
    <property type="evidence" value="ECO:0007669"/>
    <property type="project" value="UniProtKB-UniRule"/>
</dbReference>
<dbReference type="CDD" id="cd00609">
    <property type="entry name" value="AAT_like"/>
    <property type="match status" value="1"/>
</dbReference>
<dbReference type="Gene3D" id="3.90.1150.10">
    <property type="entry name" value="Aspartate Aminotransferase, domain 1"/>
    <property type="match status" value="1"/>
</dbReference>
<dbReference type="Gene3D" id="3.40.640.10">
    <property type="entry name" value="Type I PLP-dependent aspartate aminotransferase-like (Major domain)"/>
    <property type="match status" value="1"/>
</dbReference>
<dbReference type="HAMAP" id="MF_01023">
    <property type="entry name" value="HisC_aminotrans_2"/>
    <property type="match status" value="1"/>
</dbReference>
<dbReference type="InterPro" id="IPR001917">
    <property type="entry name" value="Aminotrans_II_pyridoxalP_BS"/>
</dbReference>
<dbReference type="InterPro" id="IPR004839">
    <property type="entry name" value="Aminotransferase_I/II_large"/>
</dbReference>
<dbReference type="InterPro" id="IPR005861">
    <property type="entry name" value="HisP_aminotrans"/>
</dbReference>
<dbReference type="InterPro" id="IPR050106">
    <property type="entry name" value="HistidinolP_aminotransfase"/>
</dbReference>
<dbReference type="InterPro" id="IPR015424">
    <property type="entry name" value="PyrdxlP-dep_Trfase"/>
</dbReference>
<dbReference type="InterPro" id="IPR015421">
    <property type="entry name" value="PyrdxlP-dep_Trfase_major"/>
</dbReference>
<dbReference type="InterPro" id="IPR015422">
    <property type="entry name" value="PyrdxlP-dep_Trfase_small"/>
</dbReference>
<dbReference type="NCBIfam" id="TIGR01141">
    <property type="entry name" value="hisC"/>
    <property type="match status" value="1"/>
</dbReference>
<dbReference type="PANTHER" id="PTHR43643:SF3">
    <property type="entry name" value="HISTIDINOL-PHOSPHATE AMINOTRANSFERASE"/>
    <property type="match status" value="1"/>
</dbReference>
<dbReference type="PANTHER" id="PTHR43643">
    <property type="entry name" value="HISTIDINOL-PHOSPHATE AMINOTRANSFERASE 2"/>
    <property type="match status" value="1"/>
</dbReference>
<dbReference type="Pfam" id="PF00155">
    <property type="entry name" value="Aminotran_1_2"/>
    <property type="match status" value="1"/>
</dbReference>
<dbReference type="SUPFAM" id="SSF53383">
    <property type="entry name" value="PLP-dependent transferases"/>
    <property type="match status" value="1"/>
</dbReference>
<dbReference type="PROSITE" id="PS00599">
    <property type="entry name" value="AA_TRANSFER_CLASS_2"/>
    <property type="match status" value="1"/>
</dbReference>
<comment type="catalytic activity">
    <reaction evidence="1">
        <text>L-histidinol phosphate + 2-oxoglutarate = 3-(imidazol-4-yl)-2-oxopropyl phosphate + L-glutamate</text>
        <dbReference type="Rhea" id="RHEA:23744"/>
        <dbReference type="ChEBI" id="CHEBI:16810"/>
        <dbReference type="ChEBI" id="CHEBI:29985"/>
        <dbReference type="ChEBI" id="CHEBI:57766"/>
        <dbReference type="ChEBI" id="CHEBI:57980"/>
        <dbReference type="EC" id="2.6.1.9"/>
    </reaction>
</comment>
<comment type="cofactor">
    <cofactor evidence="1">
        <name>pyridoxal 5'-phosphate</name>
        <dbReference type="ChEBI" id="CHEBI:597326"/>
    </cofactor>
</comment>
<comment type="pathway">
    <text evidence="1">Amino-acid biosynthesis; L-histidine biosynthesis; L-histidine from 5-phospho-alpha-D-ribose 1-diphosphate: step 7/9.</text>
</comment>
<comment type="subunit">
    <text evidence="1">Homodimer.</text>
</comment>
<comment type="similarity">
    <text evidence="1">Belongs to the class-II pyridoxal-phosphate-dependent aminotransferase family. Histidinol-phosphate aminotransferase subfamily.</text>
</comment>
<feature type="chain" id="PRO_0000153421" description="Histidinol-phosphate aminotransferase">
    <location>
        <begin position="1"/>
        <end position="348"/>
    </location>
</feature>
<feature type="modified residue" description="N6-(pyridoxal phosphate)lysine" evidence="1">
    <location>
        <position position="210"/>
    </location>
</feature>
<proteinExistence type="inferred from homology"/>
<sequence length="348" mass="38768">MSRFWSPFVKDLVPYVPGEQPKLARLVKLNTNENPYGPSPKALEAMRGELNDNLRLYPDPNGDRLKQAVAEYYGVTPAQVFVGNGSDEVLAHIFHGLFQHDAPLLFPDISYSFYPVYCGLYGIAFEQVALDEQFQIRIEDYKKPNAGIIFPNPNAPTGCLMPLQAVEELLQANRDSVVVVDEAYIDFGGETAISLVDRYDNLLVTQTLSKSRSLAGLRVGLAVGHPDLIEALERIKNSFNSYPLDRAAIVGAAVAFEDREYFEETCRKVIDSREVLVGQLQAKGFEVLPSAANFIFARHPQQDAGELAARLREQGVIVRHFKQPRIAQFLRITIGTPEMNQALLDALS</sequence>
<reference key="1">
    <citation type="journal article" date="2002" name="Environ. Microbiol.">
        <title>Complete genome sequence and comparative analysis of the metabolically versatile Pseudomonas putida KT2440.</title>
        <authorList>
            <person name="Nelson K.E."/>
            <person name="Weinel C."/>
            <person name="Paulsen I.T."/>
            <person name="Dodson R.J."/>
            <person name="Hilbert H."/>
            <person name="Martins dos Santos V.A.P."/>
            <person name="Fouts D.E."/>
            <person name="Gill S.R."/>
            <person name="Pop M."/>
            <person name="Holmes M."/>
            <person name="Brinkac L.M."/>
            <person name="Beanan M.J."/>
            <person name="DeBoy R.T."/>
            <person name="Daugherty S.C."/>
            <person name="Kolonay J.F."/>
            <person name="Madupu R."/>
            <person name="Nelson W.C."/>
            <person name="White O."/>
            <person name="Peterson J.D."/>
            <person name="Khouri H.M."/>
            <person name="Hance I."/>
            <person name="Chris Lee P."/>
            <person name="Holtzapple E.K."/>
            <person name="Scanlan D."/>
            <person name="Tran K."/>
            <person name="Moazzez A."/>
            <person name="Utterback T.R."/>
            <person name="Rizzo M."/>
            <person name="Lee K."/>
            <person name="Kosack D."/>
            <person name="Moestl D."/>
            <person name="Wedler H."/>
            <person name="Lauber J."/>
            <person name="Stjepandic D."/>
            <person name="Hoheisel J."/>
            <person name="Straetz M."/>
            <person name="Heim S."/>
            <person name="Kiewitz C."/>
            <person name="Eisen J.A."/>
            <person name="Timmis K.N."/>
            <person name="Duesterhoeft A."/>
            <person name="Tuemmler B."/>
            <person name="Fraser C.M."/>
        </authorList>
    </citation>
    <scope>NUCLEOTIDE SEQUENCE [LARGE SCALE GENOMIC DNA]</scope>
    <source>
        <strain>ATCC 47054 / DSM 6125 / CFBP 8728 / NCIMB 11950 / KT2440</strain>
    </source>
</reference>